<proteinExistence type="inferred from homology"/>
<dbReference type="EC" id="6.1.1.10" evidence="1"/>
<dbReference type="EMBL" id="CP000668">
    <property type="protein sequence ID" value="ABP39841.1"/>
    <property type="molecule type" value="Genomic_DNA"/>
</dbReference>
<dbReference type="RefSeq" id="WP_002211870.1">
    <property type="nucleotide sequence ID" value="NZ_CP009715.1"/>
</dbReference>
<dbReference type="SMR" id="A4TKM9"/>
<dbReference type="GeneID" id="57977046"/>
<dbReference type="KEGG" id="ypp:YPDSF_1454"/>
<dbReference type="PATRIC" id="fig|386656.14.peg.2329"/>
<dbReference type="GO" id="GO:0005829">
    <property type="term" value="C:cytosol"/>
    <property type="evidence" value="ECO:0007669"/>
    <property type="project" value="TreeGrafter"/>
</dbReference>
<dbReference type="GO" id="GO:0005524">
    <property type="term" value="F:ATP binding"/>
    <property type="evidence" value="ECO:0007669"/>
    <property type="project" value="UniProtKB-UniRule"/>
</dbReference>
<dbReference type="GO" id="GO:0046872">
    <property type="term" value="F:metal ion binding"/>
    <property type="evidence" value="ECO:0007669"/>
    <property type="project" value="UniProtKB-KW"/>
</dbReference>
<dbReference type="GO" id="GO:0004825">
    <property type="term" value="F:methionine-tRNA ligase activity"/>
    <property type="evidence" value="ECO:0007669"/>
    <property type="project" value="UniProtKB-UniRule"/>
</dbReference>
<dbReference type="GO" id="GO:0000049">
    <property type="term" value="F:tRNA binding"/>
    <property type="evidence" value="ECO:0007669"/>
    <property type="project" value="UniProtKB-KW"/>
</dbReference>
<dbReference type="GO" id="GO:0006431">
    <property type="term" value="P:methionyl-tRNA aminoacylation"/>
    <property type="evidence" value="ECO:0007669"/>
    <property type="project" value="UniProtKB-UniRule"/>
</dbReference>
<dbReference type="CDD" id="cd07957">
    <property type="entry name" value="Anticodon_Ia_Met"/>
    <property type="match status" value="1"/>
</dbReference>
<dbReference type="CDD" id="cd00814">
    <property type="entry name" value="MetRS_core"/>
    <property type="match status" value="1"/>
</dbReference>
<dbReference type="CDD" id="cd02800">
    <property type="entry name" value="tRNA_bind_EcMetRS_like"/>
    <property type="match status" value="1"/>
</dbReference>
<dbReference type="FunFam" id="1.10.730.10:FF:000005">
    <property type="entry name" value="Methionine--tRNA ligase"/>
    <property type="match status" value="1"/>
</dbReference>
<dbReference type="FunFam" id="2.20.28.20:FF:000001">
    <property type="entry name" value="Methionine--tRNA ligase"/>
    <property type="match status" value="1"/>
</dbReference>
<dbReference type="FunFam" id="2.40.50.140:FF:000042">
    <property type="entry name" value="Methionine--tRNA ligase"/>
    <property type="match status" value="1"/>
</dbReference>
<dbReference type="Gene3D" id="3.40.50.620">
    <property type="entry name" value="HUPs"/>
    <property type="match status" value="1"/>
</dbReference>
<dbReference type="Gene3D" id="1.10.730.10">
    <property type="entry name" value="Isoleucyl-tRNA Synthetase, Domain 1"/>
    <property type="match status" value="1"/>
</dbReference>
<dbReference type="Gene3D" id="2.20.28.20">
    <property type="entry name" value="Methionyl-tRNA synthetase, Zn-domain"/>
    <property type="match status" value="1"/>
</dbReference>
<dbReference type="Gene3D" id="2.40.50.140">
    <property type="entry name" value="Nucleic acid-binding proteins"/>
    <property type="match status" value="1"/>
</dbReference>
<dbReference type="HAMAP" id="MF_00098">
    <property type="entry name" value="Met_tRNA_synth_type1"/>
    <property type="match status" value="1"/>
</dbReference>
<dbReference type="InterPro" id="IPR001412">
    <property type="entry name" value="aa-tRNA-synth_I_CS"/>
</dbReference>
<dbReference type="InterPro" id="IPR041872">
    <property type="entry name" value="Anticodon_Met"/>
</dbReference>
<dbReference type="InterPro" id="IPR004495">
    <property type="entry name" value="Met-tRNA-synth_bsu_C"/>
</dbReference>
<dbReference type="InterPro" id="IPR023458">
    <property type="entry name" value="Met-tRNA_ligase_1"/>
</dbReference>
<dbReference type="InterPro" id="IPR014758">
    <property type="entry name" value="Met-tRNA_synth"/>
</dbReference>
<dbReference type="InterPro" id="IPR015413">
    <property type="entry name" value="Methionyl/Leucyl_tRNA_Synth"/>
</dbReference>
<dbReference type="InterPro" id="IPR033911">
    <property type="entry name" value="MetRS_core"/>
</dbReference>
<dbReference type="InterPro" id="IPR029038">
    <property type="entry name" value="MetRS_Zn"/>
</dbReference>
<dbReference type="InterPro" id="IPR012340">
    <property type="entry name" value="NA-bd_OB-fold"/>
</dbReference>
<dbReference type="InterPro" id="IPR014729">
    <property type="entry name" value="Rossmann-like_a/b/a_fold"/>
</dbReference>
<dbReference type="InterPro" id="IPR002547">
    <property type="entry name" value="tRNA-bd_dom"/>
</dbReference>
<dbReference type="InterPro" id="IPR009080">
    <property type="entry name" value="tRNAsynth_Ia_anticodon-bd"/>
</dbReference>
<dbReference type="NCBIfam" id="TIGR00398">
    <property type="entry name" value="metG"/>
    <property type="match status" value="1"/>
</dbReference>
<dbReference type="NCBIfam" id="TIGR00399">
    <property type="entry name" value="metG_C_term"/>
    <property type="match status" value="1"/>
</dbReference>
<dbReference type="NCBIfam" id="NF001100">
    <property type="entry name" value="PRK00133.1"/>
    <property type="match status" value="1"/>
</dbReference>
<dbReference type="PANTHER" id="PTHR45765">
    <property type="entry name" value="METHIONINE--TRNA LIGASE"/>
    <property type="match status" value="1"/>
</dbReference>
<dbReference type="PANTHER" id="PTHR45765:SF1">
    <property type="entry name" value="METHIONINE--TRNA LIGASE, CYTOPLASMIC"/>
    <property type="match status" value="1"/>
</dbReference>
<dbReference type="Pfam" id="PF19303">
    <property type="entry name" value="Anticodon_3"/>
    <property type="match status" value="1"/>
</dbReference>
<dbReference type="Pfam" id="PF09334">
    <property type="entry name" value="tRNA-synt_1g"/>
    <property type="match status" value="1"/>
</dbReference>
<dbReference type="Pfam" id="PF01588">
    <property type="entry name" value="tRNA_bind"/>
    <property type="match status" value="1"/>
</dbReference>
<dbReference type="PRINTS" id="PR01041">
    <property type="entry name" value="TRNASYNTHMET"/>
</dbReference>
<dbReference type="SUPFAM" id="SSF47323">
    <property type="entry name" value="Anticodon-binding domain of a subclass of class I aminoacyl-tRNA synthetases"/>
    <property type="match status" value="1"/>
</dbReference>
<dbReference type="SUPFAM" id="SSF57770">
    <property type="entry name" value="Methionyl-tRNA synthetase (MetRS), Zn-domain"/>
    <property type="match status" value="1"/>
</dbReference>
<dbReference type="SUPFAM" id="SSF50249">
    <property type="entry name" value="Nucleic acid-binding proteins"/>
    <property type="match status" value="1"/>
</dbReference>
<dbReference type="SUPFAM" id="SSF52374">
    <property type="entry name" value="Nucleotidylyl transferase"/>
    <property type="match status" value="1"/>
</dbReference>
<dbReference type="PROSITE" id="PS00178">
    <property type="entry name" value="AA_TRNA_LIGASE_I"/>
    <property type="match status" value="1"/>
</dbReference>
<dbReference type="PROSITE" id="PS50886">
    <property type="entry name" value="TRBD"/>
    <property type="match status" value="1"/>
</dbReference>
<organism>
    <name type="scientific">Yersinia pestis (strain Pestoides F)</name>
    <dbReference type="NCBI Taxonomy" id="386656"/>
    <lineage>
        <taxon>Bacteria</taxon>
        <taxon>Pseudomonadati</taxon>
        <taxon>Pseudomonadota</taxon>
        <taxon>Gammaproteobacteria</taxon>
        <taxon>Enterobacterales</taxon>
        <taxon>Yersiniaceae</taxon>
        <taxon>Yersinia</taxon>
    </lineage>
</organism>
<protein>
    <recommendedName>
        <fullName evidence="1">Methionine--tRNA ligase</fullName>
        <ecNumber evidence="1">6.1.1.10</ecNumber>
    </recommendedName>
    <alternativeName>
        <fullName evidence="1">Methionyl-tRNA synthetase</fullName>
        <shortName evidence="1">MetRS</shortName>
    </alternativeName>
</protein>
<reference key="1">
    <citation type="submission" date="2007-02" db="EMBL/GenBank/DDBJ databases">
        <title>Complete sequence of chromosome of Yersinia pestis Pestoides F.</title>
        <authorList>
            <consortium name="US DOE Joint Genome Institute"/>
            <person name="Copeland A."/>
            <person name="Lucas S."/>
            <person name="Lapidus A."/>
            <person name="Barry K."/>
            <person name="Detter J.C."/>
            <person name="Glavina del Rio T."/>
            <person name="Hammon N."/>
            <person name="Israni S."/>
            <person name="Dalin E."/>
            <person name="Tice H."/>
            <person name="Pitluck S."/>
            <person name="Di Bartolo G."/>
            <person name="Chain P."/>
            <person name="Malfatti S."/>
            <person name="Shin M."/>
            <person name="Vergez L."/>
            <person name="Schmutz J."/>
            <person name="Larimer F."/>
            <person name="Land M."/>
            <person name="Hauser L."/>
            <person name="Worsham P."/>
            <person name="Chu M."/>
            <person name="Bearden S."/>
            <person name="Garcia E."/>
            <person name="Richardson P."/>
        </authorList>
    </citation>
    <scope>NUCLEOTIDE SEQUENCE [LARGE SCALE GENOMIC DNA]</scope>
    <source>
        <strain>Pestoides F</strain>
    </source>
</reference>
<accession>A4TKM9</accession>
<feature type="chain" id="PRO_0000331933" description="Methionine--tRNA ligase">
    <location>
        <begin position="1"/>
        <end position="675"/>
    </location>
</feature>
<feature type="domain" description="tRNA-binding" evidence="1">
    <location>
        <begin position="573"/>
        <end position="675"/>
    </location>
</feature>
<feature type="short sequence motif" description="'HIGH' region">
    <location>
        <begin position="15"/>
        <end position="25"/>
    </location>
</feature>
<feature type="short sequence motif" description="'KMSKS' region">
    <location>
        <begin position="332"/>
        <end position="336"/>
    </location>
</feature>
<feature type="binding site" evidence="1">
    <location>
        <position position="146"/>
    </location>
    <ligand>
        <name>Zn(2+)</name>
        <dbReference type="ChEBI" id="CHEBI:29105"/>
    </ligand>
</feature>
<feature type="binding site" evidence="1">
    <location>
        <position position="149"/>
    </location>
    <ligand>
        <name>Zn(2+)</name>
        <dbReference type="ChEBI" id="CHEBI:29105"/>
    </ligand>
</feature>
<feature type="binding site" evidence="1">
    <location>
        <position position="159"/>
    </location>
    <ligand>
        <name>Zn(2+)</name>
        <dbReference type="ChEBI" id="CHEBI:29105"/>
    </ligand>
</feature>
<feature type="binding site" evidence="1">
    <location>
        <position position="162"/>
    </location>
    <ligand>
        <name>Zn(2+)</name>
        <dbReference type="ChEBI" id="CHEBI:29105"/>
    </ligand>
</feature>
<feature type="binding site" evidence="1">
    <location>
        <position position="335"/>
    </location>
    <ligand>
        <name>ATP</name>
        <dbReference type="ChEBI" id="CHEBI:30616"/>
    </ligand>
</feature>
<evidence type="ECO:0000255" key="1">
    <source>
        <dbReference type="HAMAP-Rule" id="MF_00098"/>
    </source>
</evidence>
<keyword id="KW-0030">Aminoacyl-tRNA synthetase</keyword>
<keyword id="KW-0067">ATP-binding</keyword>
<keyword id="KW-0963">Cytoplasm</keyword>
<keyword id="KW-0436">Ligase</keyword>
<keyword id="KW-0479">Metal-binding</keyword>
<keyword id="KW-0547">Nucleotide-binding</keyword>
<keyword id="KW-0648">Protein biosynthesis</keyword>
<keyword id="KW-0694">RNA-binding</keyword>
<keyword id="KW-0820">tRNA-binding</keyword>
<keyword id="KW-0862">Zinc</keyword>
<sequence length="675" mass="75636">MAQVAKKILVTCALPYANGSIHLGHMLEHIQADIWVRFQRMRGNQVHFICADDAHGTPIMLKAQQMGIEPEQMIAEMSQEHQQDFAGFAISYDNYHSTHSDENRELSSLIYGRLKANGYIKNRTISQLYDPEKGMFLPDRFVKGTCPKCKAPEQYGDNCEVCGATYSPTELIDPKSAVSGATPVMRESEHFFFDLPAFSDMLQAWTRSGALQEQVANKMQEWFDSGLQQWDITRDAPYFGFEVPDAPGKYFYVWLDAPIGYMGAFKNLCDKRGDLDFDEFWGKDAKTDLYHFIGKDIVYFHSLFWPAMLEGSNFRKPTNLFVHGYVTVNGAKMSKSRGTFIKAGTYLKYLDADCLRYYYAAKLSSRIDDIDLNLEDFVQRVNADIVNKVVNLASRNAGFINKRFAGQLADQLADPVLYKTFTDAATSIADAYNNRESGKAIREIMALADVANRYVDEQAPWVVAKQEGRDADLHAICSMGINLFRVLMTYLKPVLPSLTERTEAFLNTELTWDSIEQPLLGHSITAFKALFNRIDLDKVNEMVASSKEDMAPATRVTGPLADDPIQETISFDDFAKVDMRIALIQQAEFVEGSDKLLKLTLELGGETRQVFSGIRSAYPDPKALEGRMTVMVANLAPRKMRFGVSEGMVMAAGPGGSDIFLLSPDSGAQPGMQVK</sequence>
<gene>
    <name evidence="1" type="primary">metG</name>
    <name type="ordered locus">YPDSF_1454</name>
</gene>
<name>SYM_YERPP</name>
<comment type="function">
    <text evidence="1">Is required not only for elongation of protein synthesis but also for the initiation of all mRNA translation through initiator tRNA(fMet) aminoacylation.</text>
</comment>
<comment type="catalytic activity">
    <reaction evidence="1">
        <text>tRNA(Met) + L-methionine + ATP = L-methionyl-tRNA(Met) + AMP + diphosphate</text>
        <dbReference type="Rhea" id="RHEA:13481"/>
        <dbReference type="Rhea" id="RHEA-COMP:9667"/>
        <dbReference type="Rhea" id="RHEA-COMP:9698"/>
        <dbReference type="ChEBI" id="CHEBI:30616"/>
        <dbReference type="ChEBI" id="CHEBI:33019"/>
        <dbReference type="ChEBI" id="CHEBI:57844"/>
        <dbReference type="ChEBI" id="CHEBI:78442"/>
        <dbReference type="ChEBI" id="CHEBI:78530"/>
        <dbReference type="ChEBI" id="CHEBI:456215"/>
        <dbReference type="EC" id="6.1.1.10"/>
    </reaction>
</comment>
<comment type="cofactor">
    <cofactor evidence="1">
        <name>Zn(2+)</name>
        <dbReference type="ChEBI" id="CHEBI:29105"/>
    </cofactor>
    <text evidence="1">Binds 1 zinc ion per subunit.</text>
</comment>
<comment type="subunit">
    <text evidence="1">Homodimer.</text>
</comment>
<comment type="subcellular location">
    <subcellularLocation>
        <location evidence="1">Cytoplasm</location>
    </subcellularLocation>
</comment>
<comment type="similarity">
    <text evidence="1">Belongs to the class-I aminoacyl-tRNA synthetase family. MetG type 1 subfamily.</text>
</comment>